<comment type="catalytic activity">
    <reaction evidence="1">
        <text>CMP + ATP = CDP + ADP</text>
        <dbReference type="Rhea" id="RHEA:11600"/>
        <dbReference type="ChEBI" id="CHEBI:30616"/>
        <dbReference type="ChEBI" id="CHEBI:58069"/>
        <dbReference type="ChEBI" id="CHEBI:60377"/>
        <dbReference type="ChEBI" id="CHEBI:456216"/>
        <dbReference type="EC" id="2.7.4.25"/>
    </reaction>
</comment>
<comment type="catalytic activity">
    <reaction evidence="1">
        <text>dCMP + ATP = dCDP + ADP</text>
        <dbReference type="Rhea" id="RHEA:25094"/>
        <dbReference type="ChEBI" id="CHEBI:30616"/>
        <dbReference type="ChEBI" id="CHEBI:57566"/>
        <dbReference type="ChEBI" id="CHEBI:58593"/>
        <dbReference type="ChEBI" id="CHEBI:456216"/>
        <dbReference type="EC" id="2.7.4.25"/>
    </reaction>
</comment>
<comment type="subcellular location">
    <subcellularLocation>
        <location evidence="1">Cytoplasm</location>
    </subcellularLocation>
</comment>
<comment type="similarity">
    <text evidence="1">Belongs to the cytidylate kinase family. Type 1 subfamily.</text>
</comment>
<accession>Q07UH9</accession>
<dbReference type="EC" id="2.7.4.25" evidence="1"/>
<dbReference type="EMBL" id="CP000463">
    <property type="protein sequence ID" value="ABJ04405.1"/>
    <property type="molecule type" value="Genomic_DNA"/>
</dbReference>
<dbReference type="SMR" id="Q07UH9"/>
<dbReference type="STRING" id="316055.RPE_0446"/>
<dbReference type="KEGG" id="rpe:RPE_0446"/>
<dbReference type="eggNOG" id="COG0283">
    <property type="taxonomic scope" value="Bacteria"/>
</dbReference>
<dbReference type="HOGENOM" id="CLU_079959_0_1_5"/>
<dbReference type="OrthoDB" id="9807434at2"/>
<dbReference type="GO" id="GO:0005737">
    <property type="term" value="C:cytoplasm"/>
    <property type="evidence" value="ECO:0007669"/>
    <property type="project" value="UniProtKB-SubCell"/>
</dbReference>
<dbReference type="GO" id="GO:0005524">
    <property type="term" value="F:ATP binding"/>
    <property type="evidence" value="ECO:0007669"/>
    <property type="project" value="UniProtKB-UniRule"/>
</dbReference>
<dbReference type="GO" id="GO:0036430">
    <property type="term" value="F:CMP kinase activity"/>
    <property type="evidence" value="ECO:0007669"/>
    <property type="project" value="RHEA"/>
</dbReference>
<dbReference type="GO" id="GO:0036431">
    <property type="term" value="F:dCMP kinase activity"/>
    <property type="evidence" value="ECO:0007669"/>
    <property type="project" value="RHEA"/>
</dbReference>
<dbReference type="GO" id="GO:0006220">
    <property type="term" value="P:pyrimidine nucleotide metabolic process"/>
    <property type="evidence" value="ECO:0007669"/>
    <property type="project" value="UniProtKB-UniRule"/>
</dbReference>
<dbReference type="CDD" id="cd02020">
    <property type="entry name" value="CMPK"/>
    <property type="match status" value="1"/>
</dbReference>
<dbReference type="Gene3D" id="3.40.50.300">
    <property type="entry name" value="P-loop containing nucleotide triphosphate hydrolases"/>
    <property type="match status" value="1"/>
</dbReference>
<dbReference type="HAMAP" id="MF_00238">
    <property type="entry name" value="Cytidyl_kinase_type1"/>
    <property type="match status" value="1"/>
</dbReference>
<dbReference type="InterPro" id="IPR003136">
    <property type="entry name" value="Cytidylate_kin"/>
</dbReference>
<dbReference type="InterPro" id="IPR011994">
    <property type="entry name" value="Cytidylate_kinase_dom"/>
</dbReference>
<dbReference type="InterPro" id="IPR027417">
    <property type="entry name" value="P-loop_NTPase"/>
</dbReference>
<dbReference type="NCBIfam" id="TIGR00017">
    <property type="entry name" value="cmk"/>
    <property type="match status" value="1"/>
</dbReference>
<dbReference type="Pfam" id="PF02224">
    <property type="entry name" value="Cytidylate_kin"/>
    <property type="match status" value="1"/>
</dbReference>
<dbReference type="SUPFAM" id="SSF52540">
    <property type="entry name" value="P-loop containing nucleoside triphosphate hydrolases"/>
    <property type="match status" value="1"/>
</dbReference>
<proteinExistence type="inferred from homology"/>
<organism>
    <name type="scientific">Rhodopseudomonas palustris (strain BisA53)</name>
    <dbReference type="NCBI Taxonomy" id="316055"/>
    <lineage>
        <taxon>Bacteria</taxon>
        <taxon>Pseudomonadati</taxon>
        <taxon>Pseudomonadota</taxon>
        <taxon>Alphaproteobacteria</taxon>
        <taxon>Hyphomicrobiales</taxon>
        <taxon>Nitrobacteraceae</taxon>
        <taxon>Rhodopseudomonas</taxon>
    </lineage>
</organism>
<gene>
    <name evidence="1" type="primary">cmk</name>
    <name type="ordered locus">RPE_0446</name>
</gene>
<evidence type="ECO:0000255" key="1">
    <source>
        <dbReference type="HAMAP-Rule" id="MF_00238"/>
    </source>
</evidence>
<reference key="1">
    <citation type="submission" date="2006-09" db="EMBL/GenBank/DDBJ databases">
        <title>Complete sequence of Rhodopseudomonas palustris BisA53.</title>
        <authorList>
            <consortium name="US DOE Joint Genome Institute"/>
            <person name="Copeland A."/>
            <person name="Lucas S."/>
            <person name="Lapidus A."/>
            <person name="Barry K."/>
            <person name="Detter J.C."/>
            <person name="Glavina del Rio T."/>
            <person name="Hammon N."/>
            <person name="Israni S."/>
            <person name="Dalin E."/>
            <person name="Tice H."/>
            <person name="Pitluck S."/>
            <person name="Chain P."/>
            <person name="Malfatti S."/>
            <person name="Shin M."/>
            <person name="Vergez L."/>
            <person name="Schmutz J."/>
            <person name="Larimer F."/>
            <person name="Land M."/>
            <person name="Hauser L."/>
            <person name="Pelletier D.A."/>
            <person name="Kyrpides N."/>
            <person name="Kim E."/>
            <person name="Harwood C.S."/>
            <person name="Oda Y."/>
            <person name="Richardson P."/>
        </authorList>
    </citation>
    <scope>NUCLEOTIDE SEQUENCE [LARGE SCALE GENOMIC DNA]</scope>
    <source>
        <strain>BisA53</strain>
    </source>
</reference>
<sequence>MIIAIDGPAASGKGTLAKRLAAHYGLRHLDTGVIYRAVGMGMLALGAELTDEARAAAVAAALDPKTFDDPALKSQAVGEAASVVSALPKVRAALVDFQRRFADTPPGAVLDGRDIGTVICPQAEVKIFVVADPVVRARRRTLEAQSRGEPADEAVILADILKRDERDRSRAAAPLKQADDAHLLDNSHLDVESGLRAAIDIVEAVRAGRLR</sequence>
<name>KCY_RHOP5</name>
<feature type="chain" id="PRO_1000048260" description="Cytidylate kinase">
    <location>
        <begin position="1"/>
        <end position="211"/>
    </location>
</feature>
<feature type="binding site" evidence="1">
    <location>
        <begin position="7"/>
        <end position="15"/>
    </location>
    <ligand>
        <name>ATP</name>
        <dbReference type="ChEBI" id="CHEBI:30616"/>
    </ligand>
</feature>
<protein>
    <recommendedName>
        <fullName evidence="1">Cytidylate kinase</fullName>
        <shortName evidence="1">CK</shortName>
        <ecNumber evidence="1">2.7.4.25</ecNumber>
    </recommendedName>
    <alternativeName>
        <fullName evidence="1">Cytidine monophosphate kinase</fullName>
        <shortName evidence="1">CMP kinase</shortName>
    </alternativeName>
</protein>
<keyword id="KW-0067">ATP-binding</keyword>
<keyword id="KW-0963">Cytoplasm</keyword>
<keyword id="KW-0418">Kinase</keyword>
<keyword id="KW-0547">Nucleotide-binding</keyword>
<keyword id="KW-0808">Transferase</keyword>